<sequence length="201" mass="24065">MSRYLGPRFKIIRRLKTLPGLTSKRPKYKKRVRRRFSRPWWKKSQHLICLQEKQKIRFHYGLTERQLRQYINIAKRAQGSTGQVLLQLLEMRLDNIIFQLGIARTIPAARQIVNHRHVLVNGRVVDIPSYRCKPQDVLTIKTKNPEELRTIINKNRSKFRRKVPYHLTLDLAQNKGIVNKIIDRKDIQLKIQEMLVIEYYC</sequence>
<organism>
    <name type="scientific">Welwitschia mirabilis</name>
    <name type="common">Tree tumbo</name>
    <name type="synonym">Welwitschia bainesii</name>
    <dbReference type="NCBI Taxonomy" id="3377"/>
    <lineage>
        <taxon>Eukaryota</taxon>
        <taxon>Viridiplantae</taxon>
        <taxon>Streptophyta</taxon>
        <taxon>Embryophyta</taxon>
        <taxon>Tracheophyta</taxon>
        <taxon>Spermatophyta</taxon>
        <taxon>Gnetopsida</taxon>
        <taxon>Gnetidae</taxon>
        <taxon>Welwitschiales</taxon>
        <taxon>Welwitschiaceae</taxon>
        <taxon>Welwitschia</taxon>
    </lineage>
</organism>
<comment type="function">
    <text evidence="1">One of the primary rRNA binding proteins, it binds directly to 16S rRNA where it nucleates assembly of the body of the 30S subunit.</text>
</comment>
<comment type="function">
    <text evidence="1">With S5 and S12 plays an important role in translational accuracy.</text>
</comment>
<comment type="subunit">
    <text evidence="1">Part of the 30S ribosomal subunit. Contacts protein S5. The interaction surface between S4 and S5 is involved in control of translational fidelity (By similarity).</text>
</comment>
<comment type="subcellular location">
    <subcellularLocation>
        <location>Plastid</location>
        <location>Chloroplast</location>
    </subcellularLocation>
</comment>
<comment type="similarity">
    <text evidence="2">Belongs to the universal ribosomal protein uS4 family.</text>
</comment>
<accession>B2Y1V2</accession>
<evidence type="ECO:0000250" key="1"/>
<evidence type="ECO:0000305" key="2"/>
<keyword id="KW-0150">Chloroplast</keyword>
<keyword id="KW-0934">Plastid</keyword>
<keyword id="KW-0687">Ribonucleoprotein</keyword>
<keyword id="KW-0689">Ribosomal protein</keyword>
<keyword id="KW-0694">RNA-binding</keyword>
<keyword id="KW-0699">rRNA-binding</keyword>
<proteinExistence type="inferred from homology"/>
<protein>
    <recommendedName>
        <fullName evidence="2">Small ribosomal subunit protein uS4c</fullName>
    </recommendedName>
    <alternativeName>
        <fullName>30S ribosomal protein S4, chloroplastic</fullName>
    </alternativeName>
</protein>
<name>RR4_WELMI</name>
<reference key="1">
    <citation type="journal article" date="2008" name="BMC Evol. Biol.">
        <title>The complete plastid genome sequence of Welwitschia mirabilis: an unusually compact plastome with accelerated divergence rates.</title>
        <authorList>
            <person name="McCoy S.R."/>
            <person name="Kuehl J.V."/>
            <person name="Boore J.L."/>
            <person name="Raubeson L.A."/>
        </authorList>
    </citation>
    <scope>NUCLEOTIDE SEQUENCE [LARGE SCALE GENOMIC DNA]</scope>
</reference>
<reference key="2">
    <citation type="journal article" date="2009" name="Mol. Phylogenet. Evol.">
        <title>Evolution of reduced and compact chloroplast genomes (cpDNAs) in gnetophytes: Selection toward a lower-cost strategy.</title>
        <authorList>
            <person name="Wu C.-S."/>
            <person name="Lai Y.-T."/>
            <person name="Lin C.-P."/>
            <person name="Wang Y.-N."/>
            <person name="Chaw S.-M."/>
        </authorList>
    </citation>
    <scope>NUCLEOTIDE SEQUENCE [LARGE SCALE GENOMIC DNA]</scope>
</reference>
<feature type="chain" id="PRO_1000165373" description="Small ribosomal subunit protein uS4c">
    <location>
        <begin position="1"/>
        <end position="201"/>
    </location>
</feature>
<feature type="domain" description="S4 RNA-binding">
    <location>
        <begin position="91"/>
        <end position="151"/>
    </location>
</feature>
<gene>
    <name type="primary">rps4</name>
</gene>
<geneLocation type="chloroplast"/>
<dbReference type="EMBL" id="EU342371">
    <property type="protein sequence ID" value="ABY26782.1"/>
    <property type="molecule type" value="Genomic_DNA"/>
</dbReference>
<dbReference type="EMBL" id="AP009568">
    <property type="protein sequence ID" value="BAH11236.1"/>
    <property type="molecule type" value="Genomic_DNA"/>
</dbReference>
<dbReference type="RefSeq" id="YP_001876569.1">
    <property type="nucleotide sequence ID" value="NC_010654.1"/>
</dbReference>
<dbReference type="SMR" id="B2Y1V2"/>
<dbReference type="GeneID" id="6276222"/>
<dbReference type="GO" id="GO:0009507">
    <property type="term" value="C:chloroplast"/>
    <property type="evidence" value="ECO:0007669"/>
    <property type="project" value="UniProtKB-SubCell"/>
</dbReference>
<dbReference type="GO" id="GO:0015935">
    <property type="term" value="C:small ribosomal subunit"/>
    <property type="evidence" value="ECO:0007669"/>
    <property type="project" value="InterPro"/>
</dbReference>
<dbReference type="GO" id="GO:0019843">
    <property type="term" value="F:rRNA binding"/>
    <property type="evidence" value="ECO:0007669"/>
    <property type="project" value="UniProtKB-UniRule"/>
</dbReference>
<dbReference type="GO" id="GO:0003735">
    <property type="term" value="F:structural constituent of ribosome"/>
    <property type="evidence" value="ECO:0007669"/>
    <property type="project" value="InterPro"/>
</dbReference>
<dbReference type="GO" id="GO:0042274">
    <property type="term" value="P:ribosomal small subunit biogenesis"/>
    <property type="evidence" value="ECO:0007669"/>
    <property type="project" value="TreeGrafter"/>
</dbReference>
<dbReference type="GO" id="GO:0006412">
    <property type="term" value="P:translation"/>
    <property type="evidence" value="ECO:0007669"/>
    <property type="project" value="UniProtKB-UniRule"/>
</dbReference>
<dbReference type="CDD" id="cd00165">
    <property type="entry name" value="S4"/>
    <property type="match status" value="1"/>
</dbReference>
<dbReference type="FunFam" id="1.10.1050.10:FF:000002">
    <property type="entry name" value="30S ribosomal protein S4, chloroplastic"/>
    <property type="match status" value="1"/>
</dbReference>
<dbReference type="FunFam" id="3.10.290.10:FF:000081">
    <property type="entry name" value="30S ribosomal protein S4, chloroplastic"/>
    <property type="match status" value="1"/>
</dbReference>
<dbReference type="Gene3D" id="1.10.1050.10">
    <property type="entry name" value="Ribosomal Protein S4 Delta 41, Chain A, domain 1"/>
    <property type="match status" value="1"/>
</dbReference>
<dbReference type="Gene3D" id="3.10.290.10">
    <property type="entry name" value="RNA-binding S4 domain"/>
    <property type="match status" value="1"/>
</dbReference>
<dbReference type="HAMAP" id="MF_01306_B">
    <property type="entry name" value="Ribosomal_uS4_B"/>
    <property type="match status" value="1"/>
</dbReference>
<dbReference type="InterPro" id="IPR022801">
    <property type="entry name" value="Ribosomal_uS4"/>
</dbReference>
<dbReference type="InterPro" id="IPR005709">
    <property type="entry name" value="Ribosomal_uS4_bac-type"/>
</dbReference>
<dbReference type="InterPro" id="IPR001912">
    <property type="entry name" value="Ribosomal_uS4_N"/>
</dbReference>
<dbReference type="InterPro" id="IPR002942">
    <property type="entry name" value="S4_RNA-bd"/>
</dbReference>
<dbReference type="InterPro" id="IPR036986">
    <property type="entry name" value="S4_RNA-bd_sf"/>
</dbReference>
<dbReference type="NCBIfam" id="NF003717">
    <property type="entry name" value="PRK05327.1"/>
    <property type="match status" value="1"/>
</dbReference>
<dbReference type="NCBIfam" id="TIGR01017">
    <property type="entry name" value="rpsD_bact"/>
    <property type="match status" value="1"/>
</dbReference>
<dbReference type="PANTHER" id="PTHR11831">
    <property type="entry name" value="30S 40S RIBOSOMAL PROTEIN"/>
    <property type="match status" value="1"/>
</dbReference>
<dbReference type="PANTHER" id="PTHR11831:SF4">
    <property type="entry name" value="SMALL RIBOSOMAL SUBUNIT PROTEIN US4M"/>
    <property type="match status" value="1"/>
</dbReference>
<dbReference type="Pfam" id="PF00163">
    <property type="entry name" value="Ribosomal_S4"/>
    <property type="match status" value="1"/>
</dbReference>
<dbReference type="Pfam" id="PF01479">
    <property type="entry name" value="S4"/>
    <property type="match status" value="1"/>
</dbReference>
<dbReference type="SMART" id="SM01390">
    <property type="entry name" value="Ribosomal_S4"/>
    <property type="match status" value="1"/>
</dbReference>
<dbReference type="SMART" id="SM00363">
    <property type="entry name" value="S4"/>
    <property type="match status" value="1"/>
</dbReference>
<dbReference type="SUPFAM" id="SSF55174">
    <property type="entry name" value="Alpha-L RNA-binding motif"/>
    <property type="match status" value="1"/>
</dbReference>
<dbReference type="PROSITE" id="PS50889">
    <property type="entry name" value="S4"/>
    <property type="match status" value="1"/>
</dbReference>